<protein>
    <recommendedName>
        <fullName evidence="1">Small ribosomal subunit protein bS18</fullName>
    </recommendedName>
    <alternativeName>
        <fullName evidence="2">30S ribosomal protein S18</fullName>
    </alternativeName>
</protein>
<proteinExistence type="inferred from homology"/>
<gene>
    <name evidence="1" type="primary">rpsR</name>
    <name type="ordered locus">OCAR_6372</name>
    <name type="ordered locus">OCA5_c16720</name>
</gene>
<keyword id="KW-1185">Reference proteome</keyword>
<keyword id="KW-0687">Ribonucleoprotein</keyword>
<keyword id="KW-0689">Ribosomal protein</keyword>
<keyword id="KW-0694">RNA-binding</keyword>
<keyword id="KW-0699">rRNA-binding</keyword>
<organism>
    <name type="scientific">Afipia carboxidovorans (strain ATCC 49405 / DSM 1227 / KCTC 32145 / OM5)</name>
    <name type="common">Oligotropha carboxidovorans</name>
    <dbReference type="NCBI Taxonomy" id="504832"/>
    <lineage>
        <taxon>Bacteria</taxon>
        <taxon>Pseudomonadati</taxon>
        <taxon>Pseudomonadota</taxon>
        <taxon>Alphaproteobacteria</taxon>
        <taxon>Hyphomicrobiales</taxon>
        <taxon>Nitrobacteraceae</taxon>
        <taxon>Afipia</taxon>
    </lineage>
</organism>
<sequence length="79" mass="9066">MADAGARRPFFRRRKTCPFTGSNAPKIDFKDSKLLMRYVSERGKIVPSRITAVSALKQRELARAIKRARFLGLLPYVIR</sequence>
<evidence type="ECO:0000255" key="1">
    <source>
        <dbReference type="HAMAP-Rule" id="MF_00270"/>
    </source>
</evidence>
<evidence type="ECO:0000305" key="2"/>
<comment type="function">
    <text evidence="1">Binds as a heterodimer with protein bS6 to the central domain of the 16S rRNA, where it helps stabilize the platform of the 30S subunit.</text>
</comment>
<comment type="subunit">
    <text evidence="1">Part of the 30S ribosomal subunit. Forms a tight heterodimer with protein bS6.</text>
</comment>
<comment type="similarity">
    <text evidence="1">Belongs to the bacterial ribosomal protein bS18 family.</text>
</comment>
<accession>B6JGW4</accession>
<accession>F8C0L0</accession>
<name>RS18_AFIC5</name>
<dbReference type="EMBL" id="CP001196">
    <property type="protein sequence ID" value="ACI93485.1"/>
    <property type="molecule type" value="Genomic_DNA"/>
</dbReference>
<dbReference type="EMBL" id="CP002826">
    <property type="protein sequence ID" value="AEI06386.1"/>
    <property type="molecule type" value="Genomic_DNA"/>
</dbReference>
<dbReference type="RefSeq" id="WP_012563511.1">
    <property type="nucleotide sequence ID" value="NC_015684.1"/>
</dbReference>
<dbReference type="SMR" id="B6JGW4"/>
<dbReference type="STRING" id="504832.OCA5_c16720"/>
<dbReference type="KEGG" id="oca:OCAR_6372"/>
<dbReference type="KEGG" id="ocg:OCA5_c16720"/>
<dbReference type="PATRIC" id="fig|504832.7.peg.1784"/>
<dbReference type="eggNOG" id="COG0238">
    <property type="taxonomic scope" value="Bacteria"/>
</dbReference>
<dbReference type="HOGENOM" id="CLU_148710_2_2_5"/>
<dbReference type="OrthoDB" id="9812008at2"/>
<dbReference type="Proteomes" id="UP000007730">
    <property type="component" value="Chromosome"/>
</dbReference>
<dbReference type="GO" id="GO:0022627">
    <property type="term" value="C:cytosolic small ribosomal subunit"/>
    <property type="evidence" value="ECO:0007669"/>
    <property type="project" value="TreeGrafter"/>
</dbReference>
<dbReference type="GO" id="GO:0070181">
    <property type="term" value="F:small ribosomal subunit rRNA binding"/>
    <property type="evidence" value="ECO:0007669"/>
    <property type="project" value="TreeGrafter"/>
</dbReference>
<dbReference type="GO" id="GO:0003735">
    <property type="term" value="F:structural constituent of ribosome"/>
    <property type="evidence" value="ECO:0007669"/>
    <property type="project" value="InterPro"/>
</dbReference>
<dbReference type="GO" id="GO:0006412">
    <property type="term" value="P:translation"/>
    <property type="evidence" value="ECO:0007669"/>
    <property type="project" value="UniProtKB-UniRule"/>
</dbReference>
<dbReference type="FunFam" id="4.10.640.10:FF:000006">
    <property type="entry name" value="30S ribosomal protein S18"/>
    <property type="match status" value="1"/>
</dbReference>
<dbReference type="Gene3D" id="4.10.640.10">
    <property type="entry name" value="Ribosomal protein S18"/>
    <property type="match status" value="1"/>
</dbReference>
<dbReference type="HAMAP" id="MF_00270">
    <property type="entry name" value="Ribosomal_bS18"/>
    <property type="match status" value="1"/>
</dbReference>
<dbReference type="InterPro" id="IPR001648">
    <property type="entry name" value="Ribosomal_bS18"/>
</dbReference>
<dbReference type="InterPro" id="IPR018275">
    <property type="entry name" value="Ribosomal_bS18_CS"/>
</dbReference>
<dbReference type="InterPro" id="IPR036870">
    <property type="entry name" value="Ribosomal_bS18_sf"/>
</dbReference>
<dbReference type="NCBIfam" id="TIGR00165">
    <property type="entry name" value="S18"/>
    <property type="match status" value="1"/>
</dbReference>
<dbReference type="PANTHER" id="PTHR13479">
    <property type="entry name" value="30S RIBOSOMAL PROTEIN S18"/>
    <property type="match status" value="1"/>
</dbReference>
<dbReference type="PANTHER" id="PTHR13479:SF40">
    <property type="entry name" value="SMALL RIBOSOMAL SUBUNIT PROTEIN BS18M"/>
    <property type="match status" value="1"/>
</dbReference>
<dbReference type="Pfam" id="PF01084">
    <property type="entry name" value="Ribosomal_S18"/>
    <property type="match status" value="1"/>
</dbReference>
<dbReference type="PRINTS" id="PR00974">
    <property type="entry name" value="RIBOSOMALS18"/>
</dbReference>
<dbReference type="SUPFAM" id="SSF46911">
    <property type="entry name" value="Ribosomal protein S18"/>
    <property type="match status" value="1"/>
</dbReference>
<dbReference type="PROSITE" id="PS00057">
    <property type="entry name" value="RIBOSOMAL_S18"/>
    <property type="match status" value="1"/>
</dbReference>
<feature type="chain" id="PRO_1000114434" description="Small ribosomal subunit protein bS18">
    <location>
        <begin position="1"/>
        <end position="79"/>
    </location>
</feature>
<reference key="1">
    <citation type="journal article" date="2008" name="J. Bacteriol.">
        <title>Genome sequence of the chemolithoautotrophic bacterium Oligotropha carboxidovorans OM5T.</title>
        <authorList>
            <person name="Paul D."/>
            <person name="Bridges S."/>
            <person name="Burgess S.C."/>
            <person name="Dandass Y."/>
            <person name="Lawrence M.L."/>
        </authorList>
    </citation>
    <scope>NUCLEOTIDE SEQUENCE [LARGE SCALE GENOMIC DNA]</scope>
    <source>
        <strain>ATCC 49405 / DSM 1227 / KCTC 32145 / OM5</strain>
    </source>
</reference>
<reference key="2">
    <citation type="journal article" date="2011" name="J. Bacteriol.">
        <title>Complete genome sequences of the chemolithoautotrophic Oligotropha carboxidovorans strains OM4 and OM5.</title>
        <authorList>
            <person name="Volland S."/>
            <person name="Rachinger M."/>
            <person name="Strittmatter A."/>
            <person name="Daniel R."/>
            <person name="Gottschalk G."/>
            <person name="Meyer O."/>
        </authorList>
    </citation>
    <scope>NUCLEOTIDE SEQUENCE [LARGE SCALE GENOMIC DNA]</scope>
    <source>
        <strain>ATCC 49405 / DSM 1227 / KCTC 32145 / OM5</strain>
    </source>
</reference>